<evidence type="ECO:0000255" key="1">
    <source>
        <dbReference type="HAMAP-Rule" id="MF_00073"/>
    </source>
</evidence>
<name>NUSB_PAEAT</name>
<reference key="1">
    <citation type="journal article" date="2006" name="PLoS Genet.">
        <title>Secrets of soil survival revealed by the genome sequence of Arthrobacter aurescens TC1.</title>
        <authorList>
            <person name="Mongodin E.F."/>
            <person name="Shapir N."/>
            <person name="Daugherty S.C."/>
            <person name="DeBoy R.T."/>
            <person name="Emerson J.B."/>
            <person name="Shvartzbeyn A."/>
            <person name="Radune D."/>
            <person name="Vamathevan J."/>
            <person name="Riggs F."/>
            <person name="Grinberg V."/>
            <person name="Khouri H.M."/>
            <person name="Wackett L.P."/>
            <person name="Nelson K.E."/>
            <person name="Sadowsky M.J."/>
        </authorList>
    </citation>
    <scope>NUCLEOTIDE SEQUENCE [LARGE SCALE GENOMIC DNA]</scope>
    <source>
        <strain>TC1</strain>
    </source>
</reference>
<comment type="function">
    <text evidence="1">Involved in transcription antitermination. Required for transcription of ribosomal RNA (rRNA) genes. Binds specifically to the boxA antiterminator sequence of the ribosomal RNA (rrn) operons.</text>
</comment>
<comment type="similarity">
    <text evidence="1">Belongs to the NusB family.</text>
</comment>
<dbReference type="EMBL" id="CP000474">
    <property type="protein sequence ID" value="ABM08169.1"/>
    <property type="molecule type" value="Genomic_DNA"/>
</dbReference>
<dbReference type="RefSeq" id="WP_011774956.1">
    <property type="nucleotide sequence ID" value="NC_008711.1"/>
</dbReference>
<dbReference type="SMR" id="A1R700"/>
<dbReference type="STRING" id="290340.AAur_2272"/>
<dbReference type="GeneID" id="97301133"/>
<dbReference type="KEGG" id="aau:AAur_2272"/>
<dbReference type="eggNOG" id="COG0781">
    <property type="taxonomic scope" value="Bacteria"/>
</dbReference>
<dbReference type="HOGENOM" id="CLU_087843_2_3_11"/>
<dbReference type="OrthoDB" id="3528057at2"/>
<dbReference type="Proteomes" id="UP000000637">
    <property type="component" value="Chromosome"/>
</dbReference>
<dbReference type="GO" id="GO:0005829">
    <property type="term" value="C:cytosol"/>
    <property type="evidence" value="ECO:0007669"/>
    <property type="project" value="TreeGrafter"/>
</dbReference>
<dbReference type="GO" id="GO:0003723">
    <property type="term" value="F:RNA binding"/>
    <property type="evidence" value="ECO:0007669"/>
    <property type="project" value="UniProtKB-UniRule"/>
</dbReference>
<dbReference type="GO" id="GO:0006353">
    <property type="term" value="P:DNA-templated transcription termination"/>
    <property type="evidence" value="ECO:0007669"/>
    <property type="project" value="UniProtKB-UniRule"/>
</dbReference>
<dbReference type="GO" id="GO:0031564">
    <property type="term" value="P:transcription antitermination"/>
    <property type="evidence" value="ECO:0007669"/>
    <property type="project" value="UniProtKB-KW"/>
</dbReference>
<dbReference type="Gene3D" id="1.10.940.10">
    <property type="entry name" value="NusB-like"/>
    <property type="match status" value="1"/>
</dbReference>
<dbReference type="HAMAP" id="MF_00073">
    <property type="entry name" value="NusB"/>
    <property type="match status" value="1"/>
</dbReference>
<dbReference type="InterPro" id="IPR035926">
    <property type="entry name" value="NusB-like_sf"/>
</dbReference>
<dbReference type="InterPro" id="IPR011605">
    <property type="entry name" value="NusB_fam"/>
</dbReference>
<dbReference type="InterPro" id="IPR006027">
    <property type="entry name" value="NusB_RsmB_TIM44"/>
</dbReference>
<dbReference type="NCBIfam" id="TIGR01951">
    <property type="entry name" value="nusB"/>
    <property type="match status" value="1"/>
</dbReference>
<dbReference type="PANTHER" id="PTHR11078:SF3">
    <property type="entry name" value="ANTITERMINATION NUSB DOMAIN-CONTAINING PROTEIN"/>
    <property type="match status" value="1"/>
</dbReference>
<dbReference type="PANTHER" id="PTHR11078">
    <property type="entry name" value="N UTILIZATION SUBSTANCE PROTEIN B-RELATED"/>
    <property type="match status" value="1"/>
</dbReference>
<dbReference type="Pfam" id="PF01029">
    <property type="entry name" value="NusB"/>
    <property type="match status" value="1"/>
</dbReference>
<dbReference type="SUPFAM" id="SSF48013">
    <property type="entry name" value="NusB-like"/>
    <property type="match status" value="1"/>
</dbReference>
<accession>A1R700</accession>
<keyword id="KW-0694">RNA-binding</keyword>
<keyword id="KW-0804">Transcription</keyword>
<keyword id="KW-0889">Transcription antitermination</keyword>
<keyword id="KW-0805">Transcription regulation</keyword>
<proteinExistence type="inferred from homology"/>
<organism>
    <name type="scientific">Paenarthrobacter aurescens (strain TC1)</name>
    <dbReference type="NCBI Taxonomy" id="290340"/>
    <lineage>
        <taxon>Bacteria</taxon>
        <taxon>Bacillati</taxon>
        <taxon>Actinomycetota</taxon>
        <taxon>Actinomycetes</taxon>
        <taxon>Micrococcales</taxon>
        <taxon>Micrococcaceae</taxon>
        <taxon>Paenarthrobacter</taxon>
    </lineage>
</organism>
<sequence length="136" mass="15046">MSARGKARSRALEVLFEAEQRSVSAFDAMTARREKTDLVINPYTVEIVEGVVSMQATIDEFLQTYAQGWTLERMPSVDRIILRIGAWELLYNDEVPDGVAVSEAVALAKTMSTDESPAFINGLLGRLQKLKPSLLA</sequence>
<feature type="chain" id="PRO_1000023704" description="Transcription antitermination protein NusB">
    <location>
        <begin position="1"/>
        <end position="136"/>
    </location>
</feature>
<gene>
    <name evidence="1" type="primary">nusB</name>
    <name type="ordered locus">AAur_2272</name>
</gene>
<protein>
    <recommendedName>
        <fullName evidence="1">Transcription antitermination protein NusB</fullName>
    </recommendedName>
    <alternativeName>
        <fullName evidence="1">Antitermination factor NusB</fullName>
    </alternativeName>
</protein>